<reference key="1">
    <citation type="journal article" date="2003" name="Proc. Natl. Acad. Sci. U.S.A.">
        <title>Complete genome sequence of Lactobacillus plantarum WCFS1.</title>
        <authorList>
            <person name="Kleerebezem M."/>
            <person name="Boekhorst J."/>
            <person name="van Kranenburg R."/>
            <person name="Molenaar D."/>
            <person name="Kuipers O.P."/>
            <person name="Leer R."/>
            <person name="Tarchini R."/>
            <person name="Peters S.A."/>
            <person name="Sandbrink H.M."/>
            <person name="Fiers M.W.E.J."/>
            <person name="Stiekema W."/>
            <person name="Klein Lankhorst R.M."/>
            <person name="Bron P.A."/>
            <person name="Hoffer S.M."/>
            <person name="Nierop Groot M.N."/>
            <person name="Kerkhoven R."/>
            <person name="De Vries M."/>
            <person name="Ursing B."/>
            <person name="De Vos W.M."/>
            <person name="Siezen R.J."/>
        </authorList>
    </citation>
    <scope>NUCLEOTIDE SEQUENCE [LARGE SCALE GENOMIC DNA]</scope>
    <source>
        <strain>ATCC BAA-793 / NCIMB 8826 / WCFS1</strain>
    </source>
</reference>
<reference key="2">
    <citation type="journal article" date="2012" name="J. Bacteriol.">
        <title>Complete resequencing and reannotation of the Lactobacillus plantarum WCFS1 genome.</title>
        <authorList>
            <person name="Siezen R.J."/>
            <person name="Francke C."/>
            <person name="Renckens B."/>
            <person name="Boekhorst J."/>
            <person name="Wels M."/>
            <person name="Kleerebezem M."/>
            <person name="van Hijum S.A."/>
        </authorList>
    </citation>
    <scope>NUCLEOTIDE SEQUENCE [LARGE SCALE GENOMIC DNA]</scope>
    <scope>GENOME REANNOTATION</scope>
    <source>
        <strain>ATCC BAA-793 / NCIMB 8826 / WCFS1</strain>
    </source>
</reference>
<reference key="3">
    <citation type="journal article" date="2011" name="Appl. Environ. Microbiol.">
        <title>Molecular characterization of a novel N-acetylneuraminate lyase from Lactobacillus plantarum WCFS1.</title>
        <authorList>
            <person name="Sanchez-Carron G."/>
            <person name="Garcia-Garcia M.I."/>
            <person name="Lopez-Rodriguez A.B."/>
            <person name="Jimenez-Garcia S."/>
            <person name="Sola-Carvajal A."/>
            <person name="Garcia-Carmona F."/>
            <person name="Sanchez-Ferrer A."/>
        </authorList>
    </citation>
    <scope>FUNCTION</scope>
    <scope>CATALYTIC ACTIVITY</scope>
    <scope>SUBUNIT</scope>
    <scope>BIOPHYSICOCHEMICAL PROPERTIES</scope>
    <scope>BIOTECHNOLOGY</scope>
    <scope>3D-STRUCTURE MODELING</scope>
    <source>
        <strain>ATCC BAA-793 / NCIMB 8826 / WCFS1</strain>
    </source>
</reference>
<name>NANA_LACPL</name>
<keyword id="KW-0119">Carbohydrate metabolism</keyword>
<keyword id="KW-0963">Cytoplasm</keyword>
<keyword id="KW-0456">Lyase</keyword>
<keyword id="KW-1185">Reference proteome</keyword>
<keyword id="KW-0704">Schiff base</keyword>
<evidence type="ECO:0000255" key="1">
    <source>
        <dbReference type="HAMAP-Rule" id="MF_01237"/>
    </source>
</evidence>
<evidence type="ECO:0000269" key="2">
    <source>
    </source>
</evidence>
<evidence type="ECO:0000303" key="3">
    <source>
    </source>
</evidence>
<comment type="function">
    <text evidence="1 2">Catalyzes the reversible aldol cleavage of N-acetylneuraminic acid (sialic acid; Neu5Ac) to form pyruvate and N-acetylmannosamine (ManNAc) via a Schiff base intermediate.</text>
</comment>
<comment type="catalytic activity">
    <reaction evidence="1 2">
        <text>aceneuramate = aldehydo-N-acetyl-D-mannosamine + pyruvate</text>
        <dbReference type="Rhea" id="RHEA:23296"/>
        <dbReference type="ChEBI" id="CHEBI:15361"/>
        <dbReference type="ChEBI" id="CHEBI:17122"/>
        <dbReference type="ChEBI" id="CHEBI:173083"/>
        <dbReference type="EC" id="4.1.3.3"/>
    </reaction>
</comment>
<comment type="biophysicochemical properties">
    <kinetics>
        <KM evidence="2">1.8 mM for N-acetylneuraminate</KM>
        <KM evidence="2">160 mM for N-acetyl-D-mannosamine</KM>
        <KM evidence="2">19.9 mM for pyruvate</KM>
        <text evidence="2">kcat is 10.08 sec(-1) for the cleavage of Neu5Ac and 4.8 sec(-1) for the synthetic reaction.</text>
    </kinetics>
    <phDependence>
        <text evidence="2">Optimum pH is 7-7.3 in both synthetic and cleavage directions. Is active over a broad pH range, from pH 5.0 to 9.0, in both directions. Maintains 5 to 10% activity in the synthetic direction above pH 11.0. The enzyme is also stable at basic pHs, where it maintains around 80% residual synthetic activity after 15 days of incubation.</text>
    </phDependence>
    <temperatureDependence>
        <text evidence="2">Optimum temperature is 60 degrees Celsius for synthetic activity and up to 70 degrees Celsius for the cleavage reaction. Is very thermostable, maintaining 80% of cleavage activity after 48 hours at 60 degrees Celsius. However, at higher temperatures (70 degrees Celsius), activity decreases to less than 10% in 8 hours. Temperature stability is further improved by the presence of stabilizing additives.</text>
    </temperatureDependence>
</comment>
<comment type="pathway">
    <text evidence="1">Amino-sugar metabolism; N-acetylneuraminate degradation; D-fructose 6-phosphate from N-acetylneuraminate: step 1/5.</text>
</comment>
<comment type="subunit">
    <text evidence="1 2">Homotetramer.</text>
</comment>
<comment type="subcellular location">
    <subcellularLocation>
        <location evidence="1">Cytoplasm</location>
    </subcellularLocation>
</comment>
<comment type="biotechnology">
    <text evidence="3">The good synthetic activity of this enzyme at basic pHs, together with its thermostability and pH stability at such pHs, underlines the potential biotechnological application of this new NAL for the chemo-enzymatic synthesis of sialic acid and its derivatives. Thus, these characteristics make this enzyme a promising biocatalyst.</text>
</comment>
<comment type="similarity">
    <text evidence="1">Belongs to the DapA family. NanA subfamily.</text>
</comment>
<accession>P59407</accession>
<accession>F9ULC3</accession>
<organism>
    <name type="scientific">Lactiplantibacillus plantarum (strain ATCC BAA-793 / NCIMB 8826 / WCFS1)</name>
    <name type="common">Lactobacillus plantarum</name>
    <dbReference type="NCBI Taxonomy" id="220668"/>
    <lineage>
        <taxon>Bacteria</taxon>
        <taxon>Bacillati</taxon>
        <taxon>Bacillota</taxon>
        <taxon>Bacilli</taxon>
        <taxon>Lactobacillales</taxon>
        <taxon>Lactobacillaceae</taxon>
        <taxon>Lactiplantibacillus</taxon>
    </lineage>
</organism>
<gene>
    <name evidence="1 3" type="primary">nanA</name>
    <name type="ordered locus">lp_3568</name>
</gene>
<sequence length="292" mass="32708">MSKKLLYAAQMTAFDKDGNINLDGIRALVRYNIDVNKVDGLYVCGSTGEAFMLNTDEKKQVMETVYDEANGAIDLVAQVGSLNLKEAKELAKFATDLGYPKLSAVTPFYYNFTFEQIKDYYNEILKDVDNKLLIYSIPALTGVALTTDQFAELFENPKIIGIKYTNADFYLLERVRNAFPDKLILSGFDEMLLPALALNVDGCIGSTYNLNAPRVREEMDAFEAGDIDKARQLQNISNDMITDLIANDIYPTLKLVMKHMGVDAGYVKKPMSHPTPEMEAGATAIYEKYFKN</sequence>
<protein>
    <recommendedName>
        <fullName evidence="1 3">N-acetylneuraminate lyase</fullName>
        <shortName evidence="1 3">NAL</shortName>
        <shortName evidence="1 3">Neu5Ac lyase</shortName>
        <ecNumber evidence="1 2">4.1.3.3</ecNumber>
    </recommendedName>
    <alternativeName>
        <fullName evidence="1">N-acetylneuraminate pyruvate-lyase</fullName>
    </alternativeName>
    <alternativeName>
        <fullName evidence="1">N-acetylneuraminic acid aldolase</fullName>
    </alternativeName>
    <alternativeName>
        <fullName evidence="1">Sialate lyase</fullName>
    </alternativeName>
    <alternativeName>
        <fullName evidence="1 3">Sialic acid aldolase</fullName>
    </alternativeName>
    <alternativeName>
        <fullName evidence="1">Sialic acid lyase</fullName>
    </alternativeName>
</protein>
<feature type="chain" id="PRO_0000103215" description="N-acetylneuraminate lyase">
    <location>
        <begin position="1"/>
        <end position="292"/>
    </location>
</feature>
<feature type="active site" description="Proton donor" evidence="1">
    <location>
        <position position="135"/>
    </location>
</feature>
<feature type="active site" description="Schiff-base intermediate with substrate" evidence="1">
    <location>
        <position position="163"/>
    </location>
</feature>
<feature type="binding site" evidence="1">
    <location>
        <position position="46"/>
    </location>
    <ligand>
        <name>aceneuramate</name>
        <dbReference type="ChEBI" id="CHEBI:173083"/>
    </ligand>
</feature>
<feature type="binding site" evidence="1">
    <location>
        <position position="47"/>
    </location>
    <ligand>
        <name>aceneuramate</name>
        <dbReference type="ChEBI" id="CHEBI:173083"/>
    </ligand>
</feature>
<feature type="binding site" evidence="1">
    <location>
        <position position="165"/>
    </location>
    <ligand>
        <name>aceneuramate</name>
        <dbReference type="ChEBI" id="CHEBI:173083"/>
    </ligand>
</feature>
<feature type="binding site" evidence="1">
    <location>
        <position position="187"/>
    </location>
    <ligand>
        <name>aceneuramate</name>
        <dbReference type="ChEBI" id="CHEBI:173083"/>
    </ligand>
</feature>
<feature type="binding site" evidence="1">
    <location>
        <position position="189"/>
    </location>
    <ligand>
        <name>aceneuramate</name>
        <dbReference type="ChEBI" id="CHEBI:173083"/>
    </ligand>
</feature>
<feature type="binding site" evidence="1">
    <location>
        <position position="190"/>
    </location>
    <ligand>
        <name>aceneuramate</name>
        <dbReference type="ChEBI" id="CHEBI:173083"/>
    </ligand>
</feature>
<feature type="binding site" evidence="1">
    <location>
        <position position="206"/>
    </location>
    <ligand>
        <name>aceneuramate</name>
        <dbReference type="ChEBI" id="CHEBI:173083"/>
    </ligand>
</feature>
<proteinExistence type="evidence at protein level"/>
<dbReference type="EC" id="4.1.3.3" evidence="1 2"/>
<dbReference type="EMBL" id="AL935263">
    <property type="protein sequence ID" value="CCC80530.1"/>
    <property type="molecule type" value="Genomic_DNA"/>
</dbReference>
<dbReference type="RefSeq" id="WP_003646215.1">
    <property type="nucleotide sequence ID" value="NC_004567.2"/>
</dbReference>
<dbReference type="RefSeq" id="YP_004891044.1">
    <property type="nucleotide sequence ID" value="NC_004567.2"/>
</dbReference>
<dbReference type="SMR" id="P59407"/>
<dbReference type="STRING" id="220668.lp_3568"/>
<dbReference type="EnsemblBacteria" id="CCC80530">
    <property type="protein sequence ID" value="CCC80530"/>
    <property type="gene ID" value="lp_3568"/>
</dbReference>
<dbReference type="KEGG" id="lpl:lp_3568"/>
<dbReference type="PATRIC" id="fig|220668.9.peg.2977"/>
<dbReference type="eggNOG" id="COG0329">
    <property type="taxonomic scope" value="Bacteria"/>
</dbReference>
<dbReference type="HOGENOM" id="CLU_049343_6_0_9"/>
<dbReference type="OrthoDB" id="9782828at2"/>
<dbReference type="PhylomeDB" id="P59407"/>
<dbReference type="UniPathway" id="UPA00629">
    <property type="reaction ID" value="UER00680"/>
</dbReference>
<dbReference type="Proteomes" id="UP000000432">
    <property type="component" value="Chromosome"/>
</dbReference>
<dbReference type="GO" id="GO:0005829">
    <property type="term" value="C:cytosol"/>
    <property type="evidence" value="ECO:0007669"/>
    <property type="project" value="TreeGrafter"/>
</dbReference>
<dbReference type="GO" id="GO:0008747">
    <property type="term" value="F:N-acetylneuraminate lyase activity"/>
    <property type="evidence" value="ECO:0007669"/>
    <property type="project" value="UniProtKB-UniRule"/>
</dbReference>
<dbReference type="GO" id="GO:0005975">
    <property type="term" value="P:carbohydrate metabolic process"/>
    <property type="evidence" value="ECO:0007669"/>
    <property type="project" value="UniProtKB-UniRule"/>
</dbReference>
<dbReference type="GO" id="GO:0019262">
    <property type="term" value="P:N-acetylneuraminate catabolic process"/>
    <property type="evidence" value="ECO:0007669"/>
    <property type="project" value="UniProtKB-UniRule"/>
</dbReference>
<dbReference type="CDD" id="cd00954">
    <property type="entry name" value="NAL"/>
    <property type="match status" value="1"/>
</dbReference>
<dbReference type="Gene3D" id="3.20.20.70">
    <property type="entry name" value="Aldolase class I"/>
    <property type="match status" value="1"/>
</dbReference>
<dbReference type="HAMAP" id="MF_01237">
    <property type="entry name" value="N_acetylneuram_lyase"/>
    <property type="match status" value="1"/>
</dbReference>
<dbReference type="InterPro" id="IPR013785">
    <property type="entry name" value="Aldolase_TIM"/>
</dbReference>
<dbReference type="InterPro" id="IPR002220">
    <property type="entry name" value="DapA-like"/>
</dbReference>
<dbReference type="InterPro" id="IPR005264">
    <property type="entry name" value="NanA"/>
</dbReference>
<dbReference type="InterPro" id="IPR020625">
    <property type="entry name" value="Schiff_base-form_aldolases_AS"/>
</dbReference>
<dbReference type="InterPro" id="IPR020624">
    <property type="entry name" value="Schiff_base-form_aldolases_CS"/>
</dbReference>
<dbReference type="NCBIfam" id="NF003164">
    <property type="entry name" value="PRK04147.1"/>
    <property type="match status" value="1"/>
</dbReference>
<dbReference type="PANTHER" id="PTHR42849">
    <property type="entry name" value="N-ACETYLNEURAMINATE LYASE"/>
    <property type="match status" value="1"/>
</dbReference>
<dbReference type="PANTHER" id="PTHR42849:SF1">
    <property type="entry name" value="N-ACETYLNEURAMINATE LYASE"/>
    <property type="match status" value="1"/>
</dbReference>
<dbReference type="Pfam" id="PF00701">
    <property type="entry name" value="DHDPS"/>
    <property type="match status" value="1"/>
</dbReference>
<dbReference type="PIRSF" id="PIRSF001365">
    <property type="entry name" value="DHDPS"/>
    <property type="match status" value="1"/>
</dbReference>
<dbReference type="PRINTS" id="PR00146">
    <property type="entry name" value="DHPICSNTHASE"/>
</dbReference>
<dbReference type="SMART" id="SM01130">
    <property type="entry name" value="DHDPS"/>
    <property type="match status" value="1"/>
</dbReference>
<dbReference type="SUPFAM" id="SSF51569">
    <property type="entry name" value="Aldolase"/>
    <property type="match status" value="1"/>
</dbReference>
<dbReference type="PROSITE" id="PS00665">
    <property type="entry name" value="DHDPS_1"/>
    <property type="match status" value="1"/>
</dbReference>
<dbReference type="PROSITE" id="PS00666">
    <property type="entry name" value="DHDPS_2"/>
    <property type="match status" value="1"/>
</dbReference>